<proteinExistence type="evidence at transcript level"/>
<dbReference type="EC" id="1.3.3.3"/>
<dbReference type="EMBL" id="AB044394">
    <property type="protein sequence ID" value="BAB61876.1"/>
    <property type="molecule type" value="mRNA"/>
</dbReference>
<dbReference type="EMBL" id="AJ420796">
    <property type="protein sequence ID" value="CAD12661.1"/>
    <property type="molecule type" value="mRNA"/>
</dbReference>
<dbReference type="EMBL" id="AC002560">
    <property type="protein sequence ID" value="AAF86536.1"/>
    <property type="molecule type" value="Genomic_DNA"/>
</dbReference>
<dbReference type="EMBL" id="CP002684">
    <property type="protein sequence ID" value="AEE27577.1"/>
    <property type="molecule type" value="Genomic_DNA"/>
</dbReference>
<dbReference type="EMBL" id="AF375424">
    <property type="protein sequence ID" value="AAK53008.1"/>
    <property type="status" value="ALT_INIT"/>
    <property type="molecule type" value="mRNA"/>
</dbReference>
<dbReference type="EMBL" id="AY113166">
    <property type="protein sequence ID" value="AAM47469.1"/>
    <property type="status" value="ALT_INIT"/>
    <property type="molecule type" value="mRNA"/>
</dbReference>
<dbReference type="PIR" id="C86166">
    <property type="entry name" value="C86166"/>
</dbReference>
<dbReference type="RefSeq" id="NP_171847.4">
    <property type="nucleotide sequence ID" value="NM_100230.7"/>
</dbReference>
<dbReference type="SMR" id="Q9LR75"/>
<dbReference type="BioGRID" id="24724">
    <property type="interactions" value="17"/>
</dbReference>
<dbReference type="FunCoup" id="Q9LR75">
    <property type="interactions" value="4108"/>
</dbReference>
<dbReference type="STRING" id="3702.Q9LR75"/>
<dbReference type="GlyGen" id="Q9LR75">
    <property type="glycosylation" value="1 site"/>
</dbReference>
<dbReference type="iPTMnet" id="Q9LR75"/>
<dbReference type="MetOSite" id="Q9LR75"/>
<dbReference type="PaxDb" id="3702-AT1G03475.1"/>
<dbReference type="ProteomicsDB" id="230318"/>
<dbReference type="EnsemblPlants" id="AT1G03475.1">
    <property type="protein sequence ID" value="AT1G03475.1"/>
    <property type="gene ID" value="AT1G03475"/>
</dbReference>
<dbReference type="GeneID" id="839489"/>
<dbReference type="Gramene" id="AT1G03475.1">
    <property type="protein sequence ID" value="AT1G03475.1"/>
    <property type="gene ID" value="AT1G03475"/>
</dbReference>
<dbReference type="KEGG" id="ath:AT1G03475"/>
<dbReference type="Araport" id="AT1G03475"/>
<dbReference type="TAIR" id="AT1G03475">
    <property type="gene designation" value="LIN2"/>
</dbReference>
<dbReference type="eggNOG" id="KOG1518">
    <property type="taxonomic scope" value="Eukaryota"/>
</dbReference>
<dbReference type="HOGENOM" id="CLU_026169_0_1_1"/>
<dbReference type="InParanoid" id="Q9LR75"/>
<dbReference type="OMA" id="VHANWRY"/>
<dbReference type="OrthoDB" id="15318at2759"/>
<dbReference type="PhylomeDB" id="Q9LR75"/>
<dbReference type="BioCyc" id="ARA:AT1G03475-MONOMER"/>
<dbReference type="BioCyc" id="MetaCyc:AT1G03475-MONOMER"/>
<dbReference type="BRENDA" id="1.3.3.3">
    <property type="organism ID" value="399"/>
</dbReference>
<dbReference type="UniPathway" id="UPA00251">
    <property type="reaction ID" value="UER00322"/>
</dbReference>
<dbReference type="UniPathway" id="UPA00668"/>
<dbReference type="CD-CODE" id="4299E36E">
    <property type="entry name" value="Nucleolus"/>
</dbReference>
<dbReference type="PRO" id="PR:Q9LR75"/>
<dbReference type="Proteomes" id="UP000006548">
    <property type="component" value="Chromosome 1"/>
</dbReference>
<dbReference type="ExpressionAtlas" id="Q9LR75">
    <property type="expression patterns" value="baseline and differential"/>
</dbReference>
<dbReference type="GO" id="GO:0048046">
    <property type="term" value="C:apoplast"/>
    <property type="evidence" value="ECO:0007005"/>
    <property type="project" value="TAIR"/>
</dbReference>
<dbReference type="GO" id="GO:0009507">
    <property type="term" value="C:chloroplast"/>
    <property type="evidence" value="ECO:0007005"/>
    <property type="project" value="TAIR"/>
</dbReference>
<dbReference type="GO" id="GO:0009570">
    <property type="term" value="C:chloroplast stroma"/>
    <property type="evidence" value="ECO:0007005"/>
    <property type="project" value="TAIR"/>
</dbReference>
<dbReference type="GO" id="GO:0005576">
    <property type="term" value="C:extracellular region"/>
    <property type="evidence" value="ECO:0007005"/>
    <property type="project" value="TAIR"/>
</dbReference>
<dbReference type="GO" id="GO:0004109">
    <property type="term" value="F:coproporphyrinogen oxidase activity"/>
    <property type="evidence" value="ECO:0007669"/>
    <property type="project" value="UniProtKB-EC"/>
</dbReference>
<dbReference type="GO" id="GO:0042803">
    <property type="term" value="F:protein homodimerization activity"/>
    <property type="evidence" value="ECO:0000250"/>
    <property type="project" value="UniProtKB"/>
</dbReference>
<dbReference type="GO" id="GO:0015995">
    <property type="term" value="P:chlorophyll biosynthetic process"/>
    <property type="evidence" value="ECO:0007669"/>
    <property type="project" value="UniProtKB-UniPathway"/>
</dbReference>
<dbReference type="GO" id="GO:0006782">
    <property type="term" value="P:protoporphyrinogen IX biosynthetic process"/>
    <property type="evidence" value="ECO:0007669"/>
    <property type="project" value="UniProtKB-UniPathway"/>
</dbReference>
<dbReference type="FunFam" id="3.40.1500.10:FF:000003">
    <property type="entry name" value="oxygen-dependent coproporphyrinogen-III oxidase, chloroplastic"/>
    <property type="match status" value="1"/>
</dbReference>
<dbReference type="Gene3D" id="3.40.1500.10">
    <property type="entry name" value="Coproporphyrinogen III oxidase, aerobic"/>
    <property type="match status" value="1"/>
</dbReference>
<dbReference type="InterPro" id="IPR001260">
    <property type="entry name" value="Coprogen_oxidase_aer"/>
</dbReference>
<dbReference type="InterPro" id="IPR036406">
    <property type="entry name" value="Coprogen_oxidase_aer_sf"/>
</dbReference>
<dbReference type="InterPro" id="IPR018375">
    <property type="entry name" value="Coprogen_oxidase_CS"/>
</dbReference>
<dbReference type="NCBIfam" id="NF003727">
    <property type="entry name" value="PRK05330.1"/>
    <property type="match status" value="1"/>
</dbReference>
<dbReference type="PANTHER" id="PTHR10755">
    <property type="entry name" value="COPROPORPHYRINOGEN III OXIDASE, MITOCHONDRIAL"/>
    <property type="match status" value="1"/>
</dbReference>
<dbReference type="PANTHER" id="PTHR10755:SF0">
    <property type="entry name" value="OXYGEN-DEPENDENT COPROPORPHYRINOGEN-III OXIDASE, MITOCHONDRIAL"/>
    <property type="match status" value="1"/>
</dbReference>
<dbReference type="Pfam" id="PF01218">
    <property type="entry name" value="Coprogen_oxidas"/>
    <property type="match status" value="1"/>
</dbReference>
<dbReference type="PIRSF" id="PIRSF000166">
    <property type="entry name" value="Coproporphyri_ox"/>
    <property type="match status" value="1"/>
</dbReference>
<dbReference type="PRINTS" id="PR00073">
    <property type="entry name" value="COPRGNOXDASE"/>
</dbReference>
<dbReference type="SUPFAM" id="SSF102886">
    <property type="entry name" value="Coproporphyrinogen III oxidase"/>
    <property type="match status" value="1"/>
</dbReference>
<dbReference type="PROSITE" id="PS01021">
    <property type="entry name" value="COPROGEN_OXIDASE"/>
    <property type="match status" value="1"/>
</dbReference>
<sequence>MASHSSTLLSSPTFAPFSSHRLHYSPNPSTLRFSRPIRNKPNLALRCSVSIEKEVPETERPFTFLRDSDDVTPSSSSSSVRARFETMIRAAQDSVCDAIEAIEGGPKFKEDVWSRPGGGGGISRVLQDGNVFEKAGVNVSVVYGVMPPEAYRAAKGSASDQKPGPVPFFAAGVSSVLHPKNPFAPTLHFNYRYFETDAPKDVPGAPRQWWFGGGTDFTPAYIFEEDVKHFHSIQKQACDKFDPSFYPRFKKWCDDYFYIKHRDERRGLGGIFFDDLNDYDQEMLLSFATECANSVVPAYIPIVEKRKDMEFTEQHKAWQQLRRGRYVEFNLVYDRGTTFGLKTGGRIESILVSLPLSARWEYDHKPEEGTEEWKLLDACINPKEWI</sequence>
<reference key="1">
    <citation type="journal article" date="2001" name="Plant J.">
        <title>A deficiency of coproporphyrinogen III oxidase causes lesion formation in Arabidopsis.</title>
        <authorList>
            <person name="Ishikawa A."/>
            <person name="Okamoto H."/>
            <person name="Iwasaki Y."/>
            <person name="Asahi T."/>
        </authorList>
    </citation>
    <scope>NUCLEOTIDE SEQUENCE [MRNA]</scope>
    <scope>FUNCTION</scope>
    <scope>DISRUPTION PHENOTYPE</scope>
</reference>
<reference key="2">
    <citation type="journal article" date="2002" name="Plant Physiol. Biochem.">
        <title>Molecular characterisation of coproporphyrinogen oxidase from Glycine max and Arabidopsis thaliana.</title>
        <authorList>
            <person name="Santana M.A."/>
            <person name="Tan F.C."/>
            <person name="Smith A.G."/>
        </authorList>
    </citation>
    <scope>NUCLEOTIDE SEQUENCE [MRNA]</scope>
    <scope>FUNCTION</scope>
    <scope>SUBCELLULAR LOCATION</scope>
    <scope>TISSUE SPECIFICITY</scope>
    <source>
        <strain>cv. Landsberg erecta</strain>
    </source>
</reference>
<reference key="3">
    <citation type="journal article" date="2000" name="Nature">
        <title>Sequence and analysis of chromosome 1 of the plant Arabidopsis thaliana.</title>
        <authorList>
            <person name="Theologis A."/>
            <person name="Ecker J.R."/>
            <person name="Palm C.J."/>
            <person name="Federspiel N.A."/>
            <person name="Kaul S."/>
            <person name="White O."/>
            <person name="Alonso J."/>
            <person name="Altafi H."/>
            <person name="Araujo R."/>
            <person name="Bowman C.L."/>
            <person name="Brooks S.Y."/>
            <person name="Buehler E."/>
            <person name="Chan A."/>
            <person name="Chao Q."/>
            <person name="Chen H."/>
            <person name="Cheuk R.F."/>
            <person name="Chin C.W."/>
            <person name="Chung M.K."/>
            <person name="Conn L."/>
            <person name="Conway A.B."/>
            <person name="Conway A.R."/>
            <person name="Creasy T.H."/>
            <person name="Dewar K."/>
            <person name="Dunn P."/>
            <person name="Etgu P."/>
            <person name="Feldblyum T.V."/>
            <person name="Feng J.-D."/>
            <person name="Fong B."/>
            <person name="Fujii C.Y."/>
            <person name="Gill J.E."/>
            <person name="Goldsmith A.D."/>
            <person name="Haas B."/>
            <person name="Hansen N.F."/>
            <person name="Hughes B."/>
            <person name="Huizar L."/>
            <person name="Hunter J.L."/>
            <person name="Jenkins J."/>
            <person name="Johnson-Hopson C."/>
            <person name="Khan S."/>
            <person name="Khaykin E."/>
            <person name="Kim C.J."/>
            <person name="Koo H.L."/>
            <person name="Kremenetskaia I."/>
            <person name="Kurtz D.B."/>
            <person name="Kwan A."/>
            <person name="Lam B."/>
            <person name="Langin-Hooper S."/>
            <person name="Lee A."/>
            <person name="Lee J.M."/>
            <person name="Lenz C.A."/>
            <person name="Li J.H."/>
            <person name="Li Y.-P."/>
            <person name="Lin X."/>
            <person name="Liu S.X."/>
            <person name="Liu Z.A."/>
            <person name="Luros J.S."/>
            <person name="Maiti R."/>
            <person name="Marziali A."/>
            <person name="Militscher J."/>
            <person name="Miranda M."/>
            <person name="Nguyen M."/>
            <person name="Nierman W.C."/>
            <person name="Osborne B.I."/>
            <person name="Pai G."/>
            <person name="Peterson J."/>
            <person name="Pham P.K."/>
            <person name="Rizzo M."/>
            <person name="Rooney T."/>
            <person name="Rowley D."/>
            <person name="Sakano H."/>
            <person name="Salzberg S.L."/>
            <person name="Schwartz J.R."/>
            <person name="Shinn P."/>
            <person name="Southwick A.M."/>
            <person name="Sun H."/>
            <person name="Tallon L.J."/>
            <person name="Tambunga G."/>
            <person name="Toriumi M.J."/>
            <person name="Town C.D."/>
            <person name="Utterback T."/>
            <person name="Van Aken S."/>
            <person name="Vaysberg M."/>
            <person name="Vysotskaia V.S."/>
            <person name="Walker M."/>
            <person name="Wu D."/>
            <person name="Yu G."/>
            <person name="Fraser C.M."/>
            <person name="Venter J.C."/>
            <person name="Davis R.W."/>
        </authorList>
    </citation>
    <scope>NUCLEOTIDE SEQUENCE [LARGE SCALE GENOMIC DNA]</scope>
    <source>
        <strain>cv. Columbia</strain>
    </source>
</reference>
<reference key="4">
    <citation type="journal article" date="2017" name="Plant J.">
        <title>Araport11: a complete reannotation of the Arabidopsis thaliana reference genome.</title>
        <authorList>
            <person name="Cheng C.Y."/>
            <person name="Krishnakumar V."/>
            <person name="Chan A.P."/>
            <person name="Thibaud-Nissen F."/>
            <person name="Schobel S."/>
            <person name="Town C.D."/>
        </authorList>
    </citation>
    <scope>GENOME REANNOTATION</scope>
    <source>
        <strain>cv. Columbia</strain>
    </source>
</reference>
<reference key="5">
    <citation type="journal article" date="2003" name="Science">
        <title>Empirical analysis of transcriptional activity in the Arabidopsis genome.</title>
        <authorList>
            <person name="Yamada K."/>
            <person name="Lim J."/>
            <person name="Dale J.M."/>
            <person name="Chen H."/>
            <person name="Shinn P."/>
            <person name="Palm C.J."/>
            <person name="Southwick A.M."/>
            <person name="Wu H.C."/>
            <person name="Kim C.J."/>
            <person name="Nguyen M."/>
            <person name="Pham P.K."/>
            <person name="Cheuk R.F."/>
            <person name="Karlin-Newmann G."/>
            <person name="Liu S.X."/>
            <person name="Lam B."/>
            <person name="Sakano H."/>
            <person name="Wu T."/>
            <person name="Yu G."/>
            <person name="Miranda M."/>
            <person name="Quach H.L."/>
            <person name="Tripp M."/>
            <person name="Chang C.H."/>
            <person name="Lee J.M."/>
            <person name="Toriumi M.J."/>
            <person name="Chan M.M."/>
            <person name="Tang C.C."/>
            <person name="Onodera C.S."/>
            <person name="Deng J.M."/>
            <person name="Akiyama K."/>
            <person name="Ansari Y."/>
            <person name="Arakawa T."/>
            <person name="Banh J."/>
            <person name="Banno F."/>
            <person name="Bowser L."/>
            <person name="Brooks S.Y."/>
            <person name="Carninci P."/>
            <person name="Chao Q."/>
            <person name="Choy N."/>
            <person name="Enju A."/>
            <person name="Goldsmith A.D."/>
            <person name="Gurjal M."/>
            <person name="Hansen N.F."/>
            <person name="Hayashizaki Y."/>
            <person name="Johnson-Hopson C."/>
            <person name="Hsuan V.W."/>
            <person name="Iida K."/>
            <person name="Karnes M."/>
            <person name="Khan S."/>
            <person name="Koesema E."/>
            <person name="Ishida J."/>
            <person name="Jiang P.X."/>
            <person name="Jones T."/>
            <person name="Kawai J."/>
            <person name="Kamiya A."/>
            <person name="Meyers C."/>
            <person name="Nakajima M."/>
            <person name="Narusaka M."/>
            <person name="Seki M."/>
            <person name="Sakurai T."/>
            <person name="Satou M."/>
            <person name="Tamse R."/>
            <person name="Vaysberg M."/>
            <person name="Wallender E.K."/>
            <person name="Wong C."/>
            <person name="Yamamura Y."/>
            <person name="Yuan S."/>
            <person name="Shinozaki K."/>
            <person name="Davis R.W."/>
            <person name="Theologis A."/>
            <person name="Ecker J.R."/>
        </authorList>
    </citation>
    <scope>NUCLEOTIDE SEQUENCE [LARGE SCALE MRNA] OF 78-386</scope>
    <source>
        <strain>cv. Columbia</strain>
    </source>
</reference>
<organism>
    <name type="scientific">Arabidopsis thaliana</name>
    <name type="common">Mouse-ear cress</name>
    <dbReference type="NCBI Taxonomy" id="3702"/>
    <lineage>
        <taxon>Eukaryota</taxon>
        <taxon>Viridiplantae</taxon>
        <taxon>Streptophyta</taxon>
        <taxon>Embryophyta</taxon>
        <taxon>Tracheophyta</taxon>
        <taxon>Spermatophyta</taxon>
        <taxon>Magnoliopsida</taxon>
        <taxon>eudicotyledons</taxon>
        <taxon>Gunneridae</taxon>
        <taxon>Pentapetalae</taxon>
        <taxon>rosids</taxon>
        <taxon>malvids</taxon>
        <taxon>Brassicales</taxon>
        <taxon>Brassicaceae</taxon>
        <taxon>Camelineae</taxon>
        <taxon>Arabidopsis</taxon>
    </lineage>
</organism>
<protein>
    <recommendedName>
        <fullName>Coproporphyrinogen-III oxidase 1, chloroplastic</fullName>
        <shortName>AtCPO-I</shortName>
        <shortName>Coprogen oxidase</shortName>
        <shortName>Coproporphyrinogenase</shortName>
        <ecNumber>1.3.3.3</ecNumber>
    </recommendedName>
    <alternativeName>
        <fullName>Protein LESION INITIATION 2</fullName>
    </alternativeName>
</protein>
<evidence type="ECO:0000250" key="1"/>
<evidence type="ECO:0000255" key="2"/>
<evidence type="ECO:0000269" key="3">
    <source>
    </source>
</evidence>
<evidence type="ECO:0000269" key="4">
    <source ref="2"/>
</evidence>
<evidence type="ECO:0000305" key="5"/>
<gene>
    <name type="primary">CPX1</name>
    <name type="synonym">CPO</name>
    <name type="synonym">HEMF</name>
    <name type="synonym">HEMF1</name>
    <name type="synonym">LIN2</name>
    <name type="ordered locus">At1g03475</name>
    <name type="ORF">F21B7.10</name>
</gene>
<keyword id="KW-0149">Chlorophyll biosynthesis</keyword>
<keyword id="KW-0150">Chloroplast</keyword>
<keyword id="KW-0350">Heme biosynthesis</keyword>
<keyword id="KW-0560">Oxidoreductase</keyword>
<keyword id="KW-0934">Plastid</keyword>
<keyword id="KW-0627">Porphyrin biosynthesis</keyword>
<keyword id="KW-1185">Reference proteome</keyword>
<keyword id="KW-0809">Transit peptide</keyword>
<accession>Q9LR75</accession>
<accession>Q546I5</accession>
<accession>Q94JR5</accession>
<comment type="function">
    <text evidence="3 4">Key enzyme in heme biosynthesis. Catalyzes the oxidative decarboxylation of propionic acid side chains of rings A and B of coproporphyrinogen III.</text>
</comment>
<comment type="catalytic activity">
    <reaction>
        <text>coproporphyrinogen III + O2 + 2 H(+) = protoporphyrinogen IX + 2 CO2 + 2 H2O</text>
        <dbReference type="Rhea" id="RHEA:18257"/>
        <dbReference type="ChEBI" id="CHEBI:15377"/>
        <dbReference type="ChEBI" id="CHEBI:15378"/>
        <dbReference type="ChEBI" id="CHEBI:15379"/>
        <dbReference type="ChEBI" id="CHEBI:16526"/>
        <dbReference type="ChEBI" id="CHEBI:57307"/>
        <dbReference type="ChEBI" id="CHEBI:57309"/>
        <dbReference type="EC" id="1.3.3.3"/>
    </reaction>
</comment>
<comment type="pathway">
    <text>Porphyrin-containing compound metabolism; protoporphyrin-IX biosynthesis; protoporphyrinogen-IX from coproporphyrinogen-III (O2 route): step 1/1.</text>
</comment>
<comment type="pathway">
    <text>Porphyrin-containing compound metabolism; chlorophyll biosynthesis.</text>
</comment>
<comment type="subunit">
    <text evidence="1">Homodimer.</text>
</comment>
<comment type="subcellular location">
    <subcellularLocation>
        <location evidence="4">Plastid</location>
        <location evidence="4">Chloroplast</location>
    </subcellularLocation>
    <subcellularLocation>
        <location evidence="4">Plastid</location>
    </subcellularLocation>
</comment>
<comment type="tissue specificity">
    <text evidence="4">Expressed in cotyledons, leaves and roots.</text>
</comment>
<comment type="disruption phenotype">
    <text evidence="3">Spontaneous formation of necrotic leaf lesions.</text>
</comment>
<comment type="similarity">
    <text evidence="5">Belongs to the aerobic coproporphyrinogen-III oxidase family.</text>
</comment>
<comment type="sequence caution" evidence="5">
    <conflict type="erroneous initiation">
        <sequence resource="EMBL-CDS" id="AAK53008"/>
    </conflict>
    <text>Truncated N-terminus.</text>
</comment>
<comment type="sequence caution" evidence="5">
    <conflict type="erroneous initiation">
        <sequence resource="EMBL-CDS" id="AAM47469"/>
    </conflict>
    <text>Truncated N-terminus.</text>
</comment>
<name>HEM61_ARATH</name>
<feature type="transit peptide" description="Chloroplast" evidence="2">
    <location>
        <begin position="1"/>
        <end position="48"/>
    </location>
</feature>
<feature type="chain" id="PRO_0000006031" description="Coproporphyrinogen-III oxidase 1, chloroplastic">
    <location>
        <begin position="49"/>
        <end position="386"/>
    </location>
</feature>
<feature type="region of interest" description="Important for dimerization" evidence="1">
    <location>
        <begin position="125"/>
        <end position="134"/>
    </location>
</feature>
<feature type="region of interest" description="Important for dimerization" evidence="1">
    <location>
        <begin position="326"/>
        <end position="361"/>
    </location>
</feature>
<feature type="active site" description="Proton donor" evidence="1">
    <location>
        <position position="188"/>
    </location>
</feature>
<feature type="binding site" evidence="1">
    <location>
        <position position="174"/>
    </location>
    <ligand>
        <name>substrate</name>
    </ligand>
</feature>
<feature type="binding site" evidence="1">
    <location>
        <begin position="190"/>
        <end position="192"/>
    </location>
    <ligand>
        <name>substrate</name>
    </ligand>
</feature>
<feature type="binding site" evidence="1">
    <location>
        <begin position="344"/>
        <end position="349"/>
    </location>
    <ligand>
        <name>substrate</name>
    </ligand>
</feature>
<feature type="site" description="Important for dimerization" evidence="1">
    <location>
        <position position="261"/>
    </location>
</feature>